<sequence length="233" mass="25920">MPKHSKRYLEARKLVDRTKYYDLDEAIELVKKTATAKFDETIELHIQTGIDYRKPEQHIRGTIVLPHGTGKEVKVLVFAKGEKAKEALEAGADYVGAEDLVEKIEKEGFLDFDVAIATPDMMRIIGRLGKILGPRGLMPSPKSGTVTQEVAEAVKEFKKGRIEVRTDKTGNIHIPVGKRSFDNEKLKENIIAAIKQIMQMKPAGVKGQFIKKAVLSSTMGPGIKLNLQSLLKE</sequence>
<comment type="function">
    <text evidence="1">Binds directly to 23S rRNA. The L1 stalk is quite mobile in the ribosome, and is involved in E site tRNA release.</text>
</comment>
<comment type="function">
    <text evidence="1">Protein L1 is also a translational repressor protein, it controls the translation of the L11 operon by binding to its mRNA.</text>
</comment>
<comment type="subunit">
    <text evidence="1">Part of the 50S ribosomal subunit.</text>
</comment>
<comment type="similarity">
    <text evidence="1">Belongs to the universal ribosomal protein uL1 family.</text>
</comment>
<protein>
    <recommendedName>
        <fullName evidence="1">Large ribosomal subunit protein uL1</fullName>
    </recommendedName>
    <alternativeName>
        <fullName evidence="2">50S ribosomal protein L1</fullName>
    </alternativeName>
</protein>
<evidence type="ECO:0000255" key="1">
    <source>
        <dbReference type="HAMAP-Rule" id="MF_01318"/>
    </source>
</evidence>
<evidence type="ECO:0000305" key="2"/>
<accession>B1L938</accession>
<gene>
    <name evidence="1" type="primary">rplA</name>
    <name type="ordered locus">TRQ2_0480</name>
</gene>
<feature type="chain" id="PRO_1000141477" description="Large ribosomal subunit protein uL1">
    <location>
        <begin position="1"/>
        <end position="233"/>
    </location>
</feature>
<organism>
    <name type="scientific">Thermotoga sp. (strain RQ2)</name>
    <dbReference type="NCBI Taxonomy" id="126740"/>
    <lineage>
        <taxon>Bacteria</taxon>
        <taxon>Thermotogati</taxon>
        <taxon>Thermotogota</taxon>
        <taxon>Thermotogae</taxon>
        <taxon>Thermotogales</taxon>
        <taxon>Thermotogaceae</taxon>
        <taxon>Thermotoga</taxon>
    </lineage>
</organism>
<reference key="1">
    <citation type="journal article" date="2011" name="J. Bacteriol.">
        <title>Genome sequence of Thermotoga sp. strain RQ2, a hyperthermophilic bacterium isolated from a geothermally heated region of the seafloor near Ribeira Quente, the Azores.</title>
        <authorList>
            <person name="Swithers K.S."/>
            <person name="DiPippo J.L."/>
            <person name="Bruce D.C."/>
            <person name="Detter C."/>
            <person name="Tapia R."/>
            <person name="Han S."/>
            <person name="Saunders E."/>
            <person name="Goodwin L.A."/>
            <person name="Han J."/>
            <person name="Woyke T."/>
            <person name="Pitluck S."/>
            <person name="Pennacchio L."/>
            <person name="Nolan M."/>
            <person name="Mikhailova N."/>
            <person name="Lykidis A."/>
            <person name="Land M.L."/>
            <person name="Brettin T."/>
            <person name="Stetter K.O."/>
            <person name="Nelson K.E."/>
            <person name="Gogarten J.P."/>
            <person name="Noll K.M."/>
        </authorList>
    </citation>
    <scope>NUCLEOTIDE SEQUENCE [LARGE SCALE GENOMIC DNA]</scope>
    <source>
        <strain>RQ2</strain>
    </source>
</reference>
<dbReference type="EMBL" id="CP000969">
    <property type="protein sequence ID" value="ACB08836.1"/>
    <property type="molecule type" value="Genomic_DNA"/>
</dbReference>
<dbReference type="RefSeq" id="WP_012310571.1">
    <property type="nucleotide sequence ID" value="NC_010483.1"/>
</dbReference>
<dbReference type="SMR" id="B1L938"/>
<dbReference type="KEGG" id="trq:TRQ2_0480"/>
<dbReference type="HOGENOM" id="CLU_062853_0_0_0"/>
<dbReference type="Proteomes" id="UP000001687">
    <property type="component" value="Chromosome"/>
</dbReference>
<dbReference type="GO" id="GO:0015934">
    <property type="term" value="C:large ribosomal subunit"/>
    <property type="evidence" value="ECO:0007669"/>
    <property type="project" value="InterPro"/>
</dbReference>
<dbReference type="GO" id="GO:0019843">
    <property type="term" value="F:rRNA binding"/>
    <property type="evidence" value="ECO:0007669"/>
    <property type="project" value="UniProtKB-UniRule"/>
</dbReference>
<dbReference type="GO" id="GO:0003735">
    <property type="term" value="F:structural constituent of ribosome"/>
    <property type="evidence" value="ECO:0007669"/>
    <property type="project" value="InterPro"/>
</dbReference>
<dbReference type="GO" id="GO:0000049">
    <property type="term" value="F:tRNA binding"/>
    <property type="evidence" value="ECO:0007669"/>
    <property type="project" value="UniProtKB-KW"/>
</dbReference>
<dbReference type="GO" id="GO:0006417">
    <property type="term" value="P:regulation of translation"/>
    <property type="evidence" value="ECO:0007669"/>
    <property type="project" value="UniProtKB-KW"/>
</dbReference>
<dbReference type="GO" id="GO:0006412">
    <property type="term" value="P:translation"/>
    <property type="evidence" value="ECO:0007669"/>
    <property type="project" value="UniProtKB-UniRule"/>
</dbReference>
<dbReference type="CDD" id="cd00403">
    <property type="entry name" value="Ribosomal_L1"/>
    <property type="match status" value="1"/>
</dbReference>
<dbReference type="FunFam" id="3.40.50.790:FF:000001">
    <property type="entry name" value="50S ribosomal protein L1"/>
    <property type="match status" value="1"/>
</dbReference>
<dbReference type="Gene3D" id="3.30.190.20">
    <property type="match status" value="1"/>
</dbReference>
<dbReference type="Gene3D" id="3.40.50.790">
    <property type="match status" value="1"/>
</dbReference>
<dbReference type="HAMAP" id="MF_01318_B">
    <property type="entry name" value="Ribosomal_uL1_B"/>
    <property type="match status" value="1"/>
</dbReference>
<dbReference type="InterPro" id="IPR005878">
    <property type="entry name" value="Ribosom_uL1_bac-type"/>
</dbReference>
<dbReference type="InterPro" id="IPR002143">
    <property type="entry name" value="Ribosomal_uL1"/>
</dbReference>
<dbReference type="InterPro" id="IPR023674">
    <property type="entry name" value="Ribosomal_uL1-like"/>
</dbReference>
<dbReference type="InterPro" id="IPR028364">
    <property type="entry name" value="Ribosomal_uL1/biogenesis"/>
</dbReference>
<dbReference type="InterPro" id="IPR016095">
    <property type="entry name" value="Ribosomal_uL1_3-a/b-sand"/>
</dbReference>
<dbReference type="InterPro" id="IPR023673">
    <property type="entry name" value="Ribosomal_uL1_CS"/>
</dbReference>
<dbReference type="NCBIfam" id="TIGR01169">
    <property type="entry name" value="rplA_bact"/>
    <property type="match status" value="1"/>
</dbReference>
<dbReference type="PANTHER" id="PTHR36427">
    <property type="entry name" value="54S RIBOSOMAL PROTEIN L1, MITOCHONDRIAL"/>
    <property type="match status" value="1"/>
</dbReference>
<dbReference type="PANTHER" id="PTHR36427:SF3">
    <property type="entry name" value="LARGE RIBOSOMAL SUBUNIT PROTEIN UL1M"/>
    <property type="match status" value="1"/>
</dbReference>
<dbReference type="Pfam" id="PF00687">
    <property type="entry name" value="Ribosomal_L1"/>
    <property type="match status" value="1"/>
</dbReference>
<dbReference type="PIRSF" id="PIRSF002155">
    <property type="entry name" value="Ribosomal_L1"/>
    <property type="match status" value="1"/>
</dbReference>
<dbReference type="SUPFAM" id="SSF56808">
    <property type="entry name" value="Ribosomal protein L1"/>
    <property type="match status" value="1"/>
</dbReference>
<dbReference type="PROSITE" id="PS01199">
    <property type="entry name" value="RIBOSOMAL_L1"/>
    <property type="match status" value="1"/>
</dbReference>
<proteinExistence type="inferred from homology"/>
<keyword id="KW-0678">Repressor</keyword>
<keyword id="KW-0687">Ribonucleoprotein</keyword>
<keyword id="KW-0689">Ribosomal protein</keyword>
<keyword id="KW-0694">RNA-binding</keyword>
<keyword id="KW-0699">rRNA-binding</keyword>
<keyword id="KW-0810">Translation regulation</keyword>
<keyword id="KW-0820">tRNA-binding</keyword>
<name>RL1_THESQ</name>